<name>EFG_PSYWF</name>
<organism>
    <name type="scientific">Psychrobacter sp. (strain PRwf-1)</name>
    <dbReference type="NCBI Taxonomy" id="349106"/>
    <lineage>
        <taxon>Bacteria</taxon>
        <taxon>Pseudomonadati</taxon>
        <taxon>Pseudomonadota</taxon>
        <taxon>Gammaproteobacteria</taxon>
        <taxon>Moraxellales</taxon>
        <taxon>Moraxellaceae</taxon>
        <taxon>Psychrobacter</taxon>
    </lineage>
</organism>
<proteinExistence type="inferred from homology"/>
<feature type="chain" id="PRO_1000071149" description="Elongation factor G">
    <location>
        <begin position="1"/>
        <end position="709"/>
    </location>
</feature>
<feature type="domain" description="tr-type G">
    <location>
        <begin position="8"/>
        <end position="290"/>
    </location>
</feature>
<feature type="binding site" evidence="1">
    <location>
        <begin position="17"/>
        <end position="24"/>
    </location>
    <ligand>
        <name>GTP</name>
        <dbReference type="ChEBI" id="CHEBI:37565"/>
    </ligand>
</feature>
<feature type="binding site" evidence="1">
    <location>
        <begin position="88"/>
        <end position="92"/>
    </location>
    <ligand>
        <name>GTP</name>
        <dbReference type="ChEBI" id="CHEBI:37565"/>
    </ligand>
</feature>
<feature type="binding site" evidence="1">
    <location>
        <begin position="142"/>
        <end position="145"/>
    </location>
    <ligand>
        <name>GTP</name>
        <dbReference type="ChEBI" id="CHEBI:37565"/>
    </ligand>
</feature>
<sequence>MARATPLNRYRNIGISAHIDAGKTTTTERILFYTGVSHKIGETHEGSATMDWMEQEQERGITITSAATTCFWSGMGQQFPQHRINIIDTPGHVDFTIEVERSMRVLDGACMVYCAVGGVQPQSETVWRQANKYKVPRLAFVNKMDRVGADFYRVKEQVKTRLGGNPVAMVIPIGKEDDFEGVIDLITMKAIYWDVESLGMKFEEREIPEELQEKAEEYRSELVEVAAEANEDLMNKYLEGEELTEDEIHAAIRQRTINNEIIPMYCGTAFKNKGVQKMLDAVIQYMPAPQDVPAIKGILDDKAETEGTREASDDAPFAALAFKIMNDKFVGNLTFVRVYSGVIKQGESVYNPVKMKRERIGRIVQMHADSQQELDEIRAGDIAALVGMKDVGTGDTLCDEKEIITLERMEFPEPVISLAVEPKTKADQEKMSIALGRLAKEDPSFRVHTDEESGQTIISGMGELHLEILVDRMKREFKVEANIGAPQVAYRETIRGTVEQEGKFVRQTGGRGKFGHVWLKLEPLDLDSGVDYQFEEQVVGGVVPKEYHGAVDKGIQERMKNGILAGYPIVGVKATLYDGSYHDVDSDELSFKMAGSIAFKKGFMNANPVLLEPVMKVEVETPEEYMGDIMGDLNRRRGMVQGMDDLPGGTKQIRAEVPLAEMFGYATNVRSMSQGRATYSMEFQKYAETPKSVAEEIMKKFSGKDDDEE</sequence>
<gene>
    <name evidence="1" type="primary">fusA</name>
    <name type="ordered locus">PsycPRwf_1861</name>
</gene>
<protein>
    <recommendedName>
        <fullName evidence="1">Elongation factor G</fullName>
        <shortName evidence="1">EF-G</shortName>
    </recommendedName>
</protein>
<keyword id="KW-0963">Cytoplasm</keyword>
<keyword id="KW-0251">Elongation factor</keyword>
<keyword id="KW-0342">GTP-binding</keyword>
<keyword id="KW-0547">Nucleotide-binding</keyword>
<keyword id="KW-0648">Protein biosynthesis</keyword>
<reference key="1">
    <citation type="submission" date="2007-05" db="EMBL/GenBank/DDBJ databases">
        <title>Complete sequence of chromosome of Psychrobacter sp. PRwf-1.</title>
        <authorList>
            <consortium name="US DOE Joint Genome Institute"/>
            <person name="Copeland A."/>
            <person name="Lucas S."/>
            <person name="Lapidus A."/>
            <person name="Barry K."/>
            <person name="Detter J.C."/>
            <person name="Glavina del Rio T."/>
            <person name="Hammon N."/>
            <person name="Israni S."/>
            <person name="Dalin E."/>
            <person name="Tice H."/>
            <person name="Pitluck S."/>
            <person name="Chain P."/>
            <person name="Malfatti S."/>
            <person name="Shin M."/>
            <person name="Vergez L."/>
            <person name="Schmutz J."/>
            <person name="Larimer F."/>
            <person name="Land M."/>
            <person name="Hauser L."/>
            <person name="Kyrpides N."/>
            <person name="Kim E."/>
            <person name="Tiedje J."/>
            <person name="Richardson P."/>
        </authorList>
    </citation>
    <scope>NUCLEOTIDE SEQUENCE [LARGE SCALE GENOMIC DNA]</scope>
    <source>
        <strain>PRwf-1</strain>
    </source>
</reference>
<comment type="function">
    <text evidence="1">Catalyzes the GTP-dependent ribosomal translocation step during translation elongation. During this step, the ribosome changes from the pre-translocational (PRE) to the post-translocational (POST) state as the newly formed A-site-bound peptidyl-tRNA and P-site-bound deacylated tRNA move to the P and E sites, respectively. Catalyzes the coordinated movement of the two tRNA molecules, the mRNA and conformational changes in the ribosome.</text>
</comment>
<comment type="subcellular location">
    <subcellularLocation>
        <location evidence="1">Cytoplasm</location>
    </subcellularLocation>
</comment>
<comment type="similarity">
    <text evidence="1">Belongs to the TRAFAC class translation factor GTPase superfamily. Classic translation factor GTPase family. EF-G/EF-2 subfamily.</text>
</comment>
<dbReference type="EMBL" id="CP000713">
    <property type="protein sequence ID" value="ABQ94801.1"/>
    <property type="molecule type" value="Genomic_DNA"/>
</dbReference>
<dbReference type="SMR" id="A5WGL0"/>
<dbReference type="STRING" id="349106.PsycPRwf_1861"/>
<dbReference type="KEGG" id="prw:PsycPRwf_1861"/>
<dbReference type="eggNOG" id="COG0480">
    <property type="taxonomic scope" value="Bacteria"/>
</dbReference>
<dbReference type="HOGENOM" id="CLU_002794_4_1_6"/>
<dbReference type="GO" id="GO:0005737">
    <property type="term" value="C:cytoplasm"/>
    <property type="evidence" value="ECO:0007669"/>
    <property type="project" value="UniProtKB-SubCell"/>
</dbReference>
<dbReference type="GO" id="GO:0005525">
    <property type="term" value="F:GTP binding"/>
    <property type="evidence" value="ECO:0007669"/>
    <property type="project" value="UniProtKB-UniRule"/>
</dbReference>
<dbReference type="GO" id="GO:0003924">
    <property type="term" value="F:GTPase activity"/>
    <property type="evidence" value="ECO:0007669"/>
    <property type="project" value="InterPro"/>
</dbReference>
<dbReference type="GO" id="GO:0097216">
    <property type="term" value="F:guanosine tetraphosphate binding"/>
    <property type="evidence" value="ECO:0007669"/>
    <property type="project" value="UniProtKB-ARBA"/>
</dbReference>
<dbReference type="GO" id="GO:0003746">
    <property type="term" value="F:translation elongation factor activity"/>
    <property type="evidence" value="ECO:0007669"/>
    <property type="project" value="UniProtKB-UniRule"/>
</dbReference>
<dbReference type="GO" id="GO:0032790">
    <property type="term" value="P:ribosome disassembly"/>
    <property type="evidence" value="ECO:0007669"/>
    <property type="project" value="TreeGrafter"/>
</dbReference>
<dbReference type="CDD" id="cd01886">
    <property type="entry name" value="EF-G"/>
    <property type="match status" value="1"/>
</dbReference>
<dbReference type="CDD" id="cd16262">
    <property type="entry name" value="EFG_III"/>
    <property type="match status" value="1"/>
</dbReference>
<dbReference type="CDD" id="cd01434">
    <property type="entry name" value="EFG_mtEFG1_IV"/>
    <property type="match status" value="1"/>
</dbReference>
<dbReference type="CDD" id="cd03713">
    <property type="entry name" value="EFG_mtEFG_C"/>
    <property type="match status" value="1"/>
</dbReference>
<dbReference type="CDD" id="cd04088">
    <property type="entry name" value="EFG_mtEFG_II"/>
    <property type="match status" value="1"/>
</dbReference>
<dbReference type="FunFam" id="2.40.30.10:FF:000006">
    <property type="entry name" value="Elongation factor G"/>
    <property type="match status" value="1"/>
</dbReference>
<dbReference type="FunFam" id="3.30.230.10:FF:000003">
    <property type="entry name" value="Elongation factor G"/>
    <property type="match status" value="1"/>
</dbReference>
<dbReference type="FunFam" id="3.30.70.240:FF:000001">
    <property type="entry name" value="Elongation factor G"/>
    <property type="match status" value="1"/>
</dbReference>
<dbReference type="FunFam" id="3.30.70.870:FF:000001">
    <property type="entry name" value="Elongation factor G"/>
    <property type="match status" value="1"/>
</dbReference>
<dbReference type="FunFam" id="3.40.50.300:FF:000029">
    <property type="entry name" value="Elongation factor G"/>
    <property type="match status" value="1"/>
</dbReference>
<dbReference type="Gene3D" id="3.30.230.10">
    <property type="match status" value="1"/>
</dbReference>
<dbReference type="Gene3D" id="3.30.70.240">
    <property type="match status" value="1"/>
</dbReference>
<dbReference type="Gene3D" id="3.30.70.870">
    <property type="entry name" value="Elongation Factor G (Translational Gtpase), domain 3"/>
    <property type="match status" value="1"/>
</dbReference>
<dbReference type="Gene3D" id="3.40.50.300">
    <property type="entry name" value="P-loop containing nucleotide triphosphate hydrolases"/>
    <property type="match status" value="1"/>
</dbReference>
<dbReference type="Gene3D" id="2.40.30.10">
    <property type="entry name" value="Translation factors"/>
    <property type="match status" value="1"/>
</dbReference>
<dbReference type="HAMAP" id="MF_00054_B">
    <property type="entry name" value="EF_G_EF_2_B"/>
    <property type="match status" value="1"/>
</dbReference>
<dbReference type="InterPro" id="IPR041095">
    <property type="entry name" value="EFG_II"/>
</dbReference>
<dbReference type="InterPro" id="IPR009022">
    <property type="entry name" value="EFG_III"/>
</dbReference>
<dbReference type="InterPro" id="IPR035647">
    <property type="entry name" value="EFG_III/V"/>
</dbReference>
<dbReference type="InterPro" id="IPR047872">
    <property type="entry name" value="EFG_IV"/>
</dbReference>
<dbReference type="InterPro" id="IPR035649">
    <property type="entry name" value="EFG_V"/>
</dbReference>
<dbReference type="InterPro" id="IPR000640">
    <property type="entry name" value="EFG_V-like"/>
</dbReference>
<dbReference type="InterPro" id="IPR004161">
    <property type="entry name" value="EFTu-like_2"/>
</dbReference>
<dbReference type="InterPro" id="IPR031157">
    <property type="entry name" value="G_TR_CS"/>
</dbReference>
<dbReference type="InterPro" id="IPR027417">
    <property type="entry name" value="P-loop_NTPase"/>
</dbReference>
<dbReference type="InterPro" id="IPR020568">
    <property type="entry name" value="Ribosomal_Su5_D2-typ_SF"/>
</dbReference>
<dbReference type="InterPro" id="IPR014721">
    <property type="entry name" value="Ribsml_uS5_D2-typ_fold_subgr"/>
</dbReference>
<dbReference type="InterPro" id="IPR005225">
    <property type="entry name" value="Small_GTP-bd"/>
</dbReference>
<dbReference type="InterPro" id="IPR000795">
    <property type="entry name" value="T_Tr_GTP-bd_dom"/>
</dbReference>
<dbReference type="InterPro" id="IPR009000">
    <property type="entry name" value="Transl_B-barrel_sf"/>
</dbReference>
<dbReference type="InterPro" id="IPR004540">
    <property type="entry name" value="Transl_elong_EFG/EF2"/>
</dbReference>
<dbReference type="InterPro" id="IPR005517">
    <property type="entry name" value="Transl_elong_EFG/EF2_IV"/>
</dbReference>
<dbReference type="NCBIfam" id="TIGR00484">
    <property type="entry name" value="EF-G"/>
    <property type="match status" value="1"/>
</dbReference>
<dbReference type="NCBIfam" id="NF009381">
    <property type="entry name" value="PRK12740.1-5"/>
    <property type="match status" value="1"/>
</dbReference>
<dbReference type="NCBIfam" id="TIGR00231">
    <property type="entry name" value="small_GTP"/>
    <property type="match status" value="1"/>
</dbReference>
<dbReference type="PANTHER" id="PTHR43261:SF1">
    <property type="entry name" value="RIBOSOME-RELEASING FACTOR 2, MITOCHONDRIAL"/>
    <property type="match status" value="1"/>
</dbReference>
<dbReference type="PANTHER" id="PTHR43261">
    <property type="entry name" value="TRANSLATION ELONGATION FACTOR G-RELATED"/>
    <property type="match status" value="1"/>
</dbReference>
<dbReference type="Pfam" id="PF00679">
    <property type="entry name" value="EFG_C"/>
    <property type="match status" value="1"/>
</dbReference>
<dbReference type="Pfam" id="PF14492">
    <property type="entry name" value="EFG_III"/>
    <property type="match status" value="1"/>
</dbReference>
<dbReference type="Pfam" id="PF03764">
    <property type="entry name" value="EFG_IV"/>
    <property type="match status" value="1"/>
</dbReference>
<dbReference type="Pfam" id="PF00009">
    <property type="entry name" value="GTP_EFTU"/>
    <property type="match status" value="1"/>
</dbReference>
<dbReference type="Pfam" id="PF03144">
    <property type="entry name" value="GTP_EFTU_D2"/>
    <property type="match status" value="1"/>
</dbReference>
<dbReference type="PRINTS" id="PR00315">
    <property type="entry name" value="ELONGATNFCT"/>
</dbReference>
<dbReference type="SMART" id="SM00838">
    <property type="entry name" value="EFG_C"/>
    <property type="match status" value="1"/>
</dbReference>
<dbReference type="SMART" id="SM00889">
    <property type="entry name" value="EFG_IV"/>
    <property type="match status" value="1"/>
</dbReference>
<dbReference type="SUPFAM" id="SSF54980">
    <property type="entry name" value="EF-G C-terminal domain-like"/>
    <property type="match status" value="2"/>
</dbReference>
<dbReference type="SUPFAM" id="SSF52540">
    <property type="entry name" value="P-loop containing nucleoside triphosphate hydrolases"/>
    <property type="match status" value="1"/>
</dbReference>
<dbReference type="SUPFAM" id="SSF54211">
    <property type="entry name" value="Ribosomal protein S5 domain 2-like"/>
    <property type="match status" value="1"/>
</dbReference>
<dbReference type="SUPFAM" id="SSF50447">
    <property type="entry name" value="Translation proteins"/>
    <property type="match status" value="1"/>
</dbReference>
<dbReference type="PROSITE" id="PS00301">
    <property type="entry name" value="G_TR_1"/>
    <property type="match status" value="1"/>
</dbReference>
<dbReference type="PROSITE" id="PS51722">
    <property type="entry name" value="G_TR_2"/>
    <property type="match status" value="1"/>
</dbReference>
<accession>A5WGL0</accession>
<evidence type="ECO:0000255" key="1">
    <source>
        <dbReference type="HAMAP-Rule" id="MF_00054"/>
    </source>
</evidence>